<protein>
    <recommendedName>
        <fullName evidence="1">Large ribosomal subunit protein eL27y</fullName>
    </recommendedName>
    <alternativeName>
        <fullName>60S ribosomal protein L27-2</fullName>
    </alternativeName>
</protein>
<comment type="similarity">
    <text evidence="2">Belongs to the eukaryotic ribosomal protein eL27 family.</text>
</comment>
<keyword id="KW-1185">Reference proteome</keyword>
<keyword id="KW-0687">Ribonucleoprotein</keyword>
<keyword id="KW-0689">Ribosomal protein</keyword>
<reference key="1">
    <citation type="journal article" date="2000" name="DNA Res.">
        <title>Structural analysis of Arabidopsis thaliana chromosome 3. II. Sequence features of the 4,251,695 bp regions covered by 90 P1, TAC and BAC clones.</title>
        <authorList>
            <person name="Kaneko T."/>
            <person name="Katoh T."/>
            <person name="Sato S."/>
            <person name="Nakamura Y."/>
            <person name="Asamizu E."/>
            <person name="Tabata S."/>
        </authorList>
    </citation>
    <scope>NUCLEOTIDE SEQUENCE [LARGE SCALE GENOMIC DNA]</scope>
    <source>
        <strain>cv. Columbia</strain>
    </source>
</reference>
<reference key="2">
    <citation type="journal article" date="2017" name="Plant J.">
        <title>Araport11: a complete reannotation of the Arabidopsis thaliana reference genome.</title>
        <authorList>
            <person name="Cheng C.Y."/>
            <person name="Krishnakumar V."/>
            <person name="Chan A.P."/>
            <person name="Thibaud-Nissen F."/>
            <person name="Schobel S."/>
            <person name="Town C.D."/>
        </authorList>
    </citation>
    <scope>GENOME REANNOTATION</scope>
    <source>
        <strain>cv. Columbia</strain>
    </source>
</reference>
<reference key="3">
    <citation type="journal article" date="2003" name="Science">
        <title>Empirical analysis of transcriptional activity in the Arabidopsis genome.</title>
        <authorList>
            <person name="Yamada K."/>
            <person name="Lim J."/>
            <person name="Dale J.M."/>
            <person name="Chen H."/>
            <person name="Shinn P."/>
            <person name="Palm C.J."/>
            <person name="Southwick A.M."/>
            <person name="Wu H.C."/>
            <person name="Kim C.J."/>
            <person name="Nguyen M."/>
            <person name="Pham P.K."/>
            <person name="Cheuk R.F."/>
            <person name="Karlin-Newmann G."/>
            <person name="Liu S.X."/>
            <person name="Lam B."/>
            <person name="Sakano H."/>
            <person name="Wu T."/>
            <person name="Yu G."/>
            <person name="Miranda M."/>
            <person name="Quach H.L."/>
            <person name="Tripp M."/>
            <person name="Chang C.H."/>
            <person name="Lee J.M."/>
            <person name="Toriumi M.J."/>
            <person name="Chan M.M."/>
            <person name="Tang C.C."/>
            <person name="Onodera C.S."/>
            <person name="Deng J.M."/>
            <person name="Akiyama K."/>
            <person name="Ansari Y."/>
            <person name="Arakawa T."/>
            <person name="Banh J."/>
            <person name="Banno F."/>
            <person name="Bowser L."/>
            <person name="Brooks S.Y."/>
            <person name="Carninci P."/>
            <person name="Chao Q."/>
            <person name="Choy N."/>
            <person name="Enju A."/>
            <person name="Goldsmith A.D."/>
            <person name="Gurjal M."/>
            <person name="Hansen N.F."/>
            <person name="Hayashizaki Y."/>
            <person name="Johnson-Hopson C."/>
            <person name="Hsuan V.W."/>
            <person name="Iida K."/>
            <person name="Karnes M."/>
            <person name="Khan S."/>
            <person name="Koesema E."/>
            <person name="Ishida J."/>
            <person name="Jiang P.X."/>
            <person name="Jones T."/>
            <person name="Kawai J."/>
            <person name="Kamiya A."/>
            <person name="Meyers C."/>
            <person name="Nakajima M."/>
            <person name="Narusaka M."/>
            <person name="Seki M."/>
            <person name="Sakurai T."/>
            <person name="Satou M."/>
            <person name="Tamse R."/>
            <person name="Vaysberg M."/>
            <person name="Wallender E.K."/>
            <person name="Wong C."/>
            <person name="Yamamura Y."/>
            <person name="Yuan S."/>
            <person name="Shinozaki K."/>
            <person name="Davis R.W."/>
            <person name="Theologis A."/>
            <person name="Ecker J.R."/>
        </authorList>
    </citation>
    <scope>NUCLEOTIDE SEQUENCE [LARGE SCALE MRNA]</scope>
    <source>
        <strain>cv. Columbia</strain>
    </source>
</reference>
<reference key="4">
    <citation type="submission" date="2002-03" db="EMBL/GenBank/DDBJ databases">
        <title>Full-length cDNA from Arabidopsis thaliana.</title>
        <authorList>
            <person name="Brover V.V."/>
            <person name="Troukhan M.E."/>
            <person name="Alexandrov N.A."/>
            <person name="Lu Y.-P."/>
            <person name="Flavell R.B."/>
            <person name="Feldmann K.A."/>
        </authorList>
    </citation>
    <scope>NUCLEOTIDE SEQUENCE [LARGE SCALE MRNA]</scope>
</reference>
<reference key="5">
    <citation type="journal article" date="2001" name="Plant Physiol.">
        <title>The organization of cytoplasmic ribosomal protein genes in the Arabidopsis genome.</title>
        <authorList>
            <person name="Barakat A."/>
            <person name="Szick-Miranda K."/>
            <person name="Chang I.-F."/>
            <person name="Guyot R."/>
            <person name="Blanc G."/>
            <person name="Cooke R."/>
            <person name="Delseny M."/>
            <person name="Bailey-Serres J."/>
        </authorList>
    </citation>
    <scope>GENE FAMILY ORGANIZATION</scope>
    <scope>NOMENCLATURE</scope>
</reference>
<reference key="6">
    <citation type="journal article" date="2023" name="Plant Cell">
        <title>An updated nomenclature for plant ribosomal protein genes.</title>
        <authorList>
            <person name="Scarpin M.R."/>
            <person name="Busche M."/>
            <person name="Martinez R.E."/>
            <person name="Harper L.C."/>
            <person name="Reiser L."/>
            <person name="Szakonyi D."/>
            <person name="Merchante C."/>
            <person name="Lan T."/>
            <person name="Xiong W."/>
            <person name="Mo B."/>
            <person name="Tang G."/>
            <person name="Chen X."/>
            <person name="Bailey-Serres J."/>
            <person name="Browning K.S."/>
            <person name="Brunkard J.O."/>
        </authorList>
    </citation>
    <scope>NOMENCLATURE</scope>
</reference>
<gene>
    <name type="primary">RPL27B</name>
    <name type="ordered locus">At3g22230</name>
    <name type="ORF">MKA23.13</name>
</gene>
<organism>
    <name type="scientific">Arabidopsis thaliana</name>
    <name type="common">Mouse-ear cress</name>
    <dbReference type="NCBI Taxonomy" id="3702"/>
    <lineage>
        <taxon>Eukaryota</taxon>
        <taxon>Viridiplantae</taxon>
        <taxon>Streptophyta</taxon>
        <taxon>Embryophyta</taxon>
        <taxon>Tracheophyta</taxon>
        <taxon>Spermatophyta</taxon>
        <taxon>Magnoliopsida</taxon>
        <taxon>eudicotyledons</taxon>
        <taxon>Gunneridae</taxon>
        <taxon>Pentapetalae</taxon>
        <taxon>rosids</taxon>
        <taxon>malvids</taxon>
        <taxon>Brassicales</taxon>
        <taxon>Brassicaceae</taxon>
        <taxon>Camelineae</taxon>
        <taxon>Arabidopsis</taxon>
    </lineage>
</organism>
<name>RL272_ARATH</name>
<proteinExistence type="evidence at transcript level"/>
<accession>Q8LCL3</accession>
<accession>Q9LIE0</accession>
<sequence length="135" mass="15615">MVKFLKQNKAVILLQGRYAGKKAVIIKSFDDGTSDRRYGHCLVAGLKKYPSKVIRKDSAKKTAKKSRVKCFIKLVNYQHLMPTRYTLDVDLKEVATLDALKSKDKKVTALKEAKAKLEERFKTGKNRWFFTKLRF</sequence>
<dbReference type="EMBL" id="AP001306">
    <property type="protein sequence ID" value="BAB03070.1"/>
    <property type="molecule type" value="Genomic_DNA"/>
</dbReference>
<dbReference type="EMBL" id="CP002686">
    <property type="protein sequence ID" value="AEE76607.1"/>
    <property type="molecule type" value="Genomic_DNA"/>
</dbReference>
<dbReference type="EMBL" id="AY062617">
    <property type="protein sequence ID" value="AAL32695.1"/>
    <property type="molecule type" value="mRNA"/>
</dbReference>
<dbReference type="EMBL" id="AY063860">
    <property type="protein sequence ID" value="AAL36216.1"/>
    <property type="molecule type" value="mRNA"/>
</dbReference>
<dbReference type="EMBL" id="AY091218">
    <property type="protein sequence ID" value="AAM14157.1"/>
    <property type="molecule type" value="mRNA"/>
</dbReference>
<dbReference type="EMBL" id="AY093389">
    <property type="protein sequence ID" value="AAM13388.1"/>
    <property type="molecule type" value="mRNA"/>
</dbReference>
<dbReference type="EMBL" id="AY136321">
    <property type="protein sequence ID" value="AAM96987.1"/>
    <property type="molecule type" value="mRNA"/>
</dbReference>
<dbReference type="EMBL" id="BT000418">
    <property type="protein sequence ID" value="AAN15737.1"/>
    <property type="molecule type" value="mRNA"/>
</dbReference>
<dbReference type="EMBL" id="AY086536">
    <property type="protein sequence ID" value="AAM63601.1"/>
    <property type="molecule type" value="mRNA"/>
</dbReference>
<dbReference type="RefSeq" id="NP_188862.1">
    <property type="nucleotide sequence ID" value="NM_113120.3"/>
</dbReference>
<dbReference type="SMR" id="Q8LCL3"/>
<dbReference type="BioGRID" id="7119">
    <property type="interactions" value="183"/>
</dbReference>
<dbReference type="FunCoup" id="Q8LCL3">
    <property type="interactions" value="3171"/>
</dbReference>
<dbReference type="STRING" id="3702.Q8LCL3"/>
<dbReference type="iPTMnet" id="Q8LCL3"/>
<dbReference type="PaxDb" id="3702-AT3G22230.1"/>
<dbReference type="ProteomicsDB" id="226903"/>
<dbReference type="EnsemblPlants" id="AT3G22230.1">
    <property type="protein sequence ID" value="AT3G22230.1"/>
    <property type="gene ID" value="AT3G22230"/>
</dbReference>
<dbReference type="GeneID" id="821787"/>
<dbReference type="Gramene" id="AT3G22230.1">
    <property type="protein sequence ID" value="AT3G22230.1"/>
    <property type="gene ID" value="AT3G22230"/>
</dbReference>
<dbReference type="KEGG" id="ath:AT3G22230"/>
<dbReference type="Araport" id="AT3G22230"/>
<dbReference type="TAIR" id="AT3G22230"/>
<dbReference type="eggNOG" id="KOG3418">
    <property type="taxonomic scope" value="Eukaryota"/>
</dbReference>
<dbReference type="HOGENOM" id="CLU_067359_0_1_1"/>
<dbReference type="InParanoid" id="Q8LCL3"/>
<dbReference type="OMA" id="KMLNYNH"/>
<dbReference type="OrthoDB" id="1083190at2759"/>
<dbReference type="PhylomeDB" id="Q8LCL3"/>
<dbReference type="CD-CODE" id="4299E36E">
    <property type="entry name" value="Nucleolus"/>
</dbReference>
<dbReference type="PRO" id="PR:Q8LCL3"/>
<dbReference type="Proteomes" id="UP000006548">
    <property type="component" value="Chromosome 3"/>
</dbReference>
<dbReference type="ExpressionAtlas" id="Q8LCL3">
    <property type="expression patterns" value="baseline and differential"/>
</dbReference>
<dbReference type="GO" id="GO:0005829">
    <property type="term" value="C:cytosol"/>
    <property type="evidence" value="ECO:0007005"/>
    <property type="project" value="TAIR"/>
</dbReference>
<dbReference type="GO" id="GO:0022625">
    <property type="term" value="C:cytosolic large ribosomal subunit"/>
    <property type="evidence" value="ECO:0007005"/>
    <property type="project" value="TAIR"/>
</dbReference>
<dbReference type="GO" id="GO:0022626">
    <property type="term" value="C:cytosolic ribosome"/>
    <property type="evidence" value="ECO:0007005"/>
    <property type="project" value="TAIR"/>
</dbReference>
<dbReference type="GO" id="GO:0003729">
    <property type="term" value="F:mRNA binding"/>
    <property type="evidence" value="ECO:0000314"/>
    <property type="project" value="TAIR"/>
</dbReference>
<dbReference type="GO" id="GO:0003735">
    <property type="term" value="F:structural constituent of ribosome"/>
    <property type="evidence" value="ECO:0000314"/>
    <property type="project" value="CAFA"/>
</dbReference>
<dbReference type="GO" id="GO:0006412">
    <property type="term" value="P:translation"/>
    <property type="evidence" value="ECO:0007669"/>
    <property type="project" value="InterPro"/>
</dbReference>
<dbReference type="CDD" id="cd06090">
    <property type="entry name" value="KOW_RPL27"/>
    <property type="match status" value="1"/>
</dbReference>
<dbReference type="FunFam" id="2.30.30.770:FF:000001">
    <property type="entry name" value="60S ribosomal protein L27"/>
    <property type="match status" value="1"/>
</dbReference>
<dbReference type="Gene3D" id="2.30.30.770">
    <property type="match status" value="1"/>
</dbReference>
<dbReference type="InterPro" id="IPR001141">
    <property type="entry name" value="Ribosomal_eL27"/>
</dbReference>
<dbReference type="InterPro" id="IPR018262">
    <property type="entry name" value="Ribosomal_eL27_CS"/>
</dbReference>
<dbReference type="InterPro" id="IPR041991">
    <property type="entry name" value="Ribosomal_eL27_KOW"/>
</dbReference>
<dbReference type="InterPro" id="IPR038655">
    <property type="entry name" value="Ribosomal_eL27_sf"/>
</dbReference>
<dbReference type="InterPro" id="IPR008991">
    <property type="entry name" value="Translation_prot_SH3-like_sf"/>
</dbReference>
<dbReference type="PANTHER" id="PTHR10497">
    <property type="entry name" value="60S RIBOSOMAL PROTEIN L27"/>
    <property type="match status" value="1"/>
</dbReference>
<dbReference type="Pfam" id="PF01777">
    <property type="entry name" value="Ribosomal_L27e"/>
    <property type="match status" value="1"/>
</dbReference>
<dbReference type="SUPFAM" id="SSF50104">
    <property type="entry name" value="Translation proteins SH3-like domain"/>
    <property type="match status" value="1"/>
</dbReference>
<dbReference type="PROSITE" id="PS01107">
    <property type="entry name" value="RIBOSOMAL_L27E"/>
    <property type="match status" value="1"/>
</dbReference>
<feature type="chain" id="PRO_0000244741" description="Large ribosomal subunit protein eL27y">
    <location>
        <begin position="1"/>
        <end position="135"/>
    </location>
</feature>
<feature type="sequence conflict" description="In Ref. 4; AAM63601." evidence="2" ref="4">
    <original>T</original>
    <variation>I</variation>
    <location>
        <position position="108"/>
    </location>
</feature>
<evidence type="ECO:0000303" key="1">
    <source>
    </source>
</evidence>
<evidence type="ECO:0000305" key="2"/>